<feature type="chain" id="PRO_0000066160" description="Uncharacterized 44.6 kDa protein in cps region">
    <location>
        <begin position="1"/>
        <end position="388"/>
    </location>
</feature>
<name>YC09_KLEPN</name>
<accession>Q48455</accession>
<reference key="1">
    <citation type="journal article" date="1995" name="J. Bacteriol.">
        <title>Genomic organization of the Klebsiella pneumoniae cps region responsible for serotype K2 capsular polysaccharide synthesis in the virulent strain Chedid.</title>
        <authorList>
            <person name="Arakawa Y."/>
            <person name="Wacharotayankun R."/>
            <person name="Nagatsuka T."/>
            <person name="Ito H."/>
            <person name="Kato N."/>
            <person name="Ohta M."/>
        </authorList>
    </citation>
    <scope>NUCLEOTIDE SEQUENCE [GENOMIC DNA]</scope>
    <source>
        <strain>Chedid</strain>
    </source>
</reference>
<sequence>MAKIIVVSTDCPYPANHGGRLDILMRLELLSSTGHDVDLIVTYKEEIDEASKQYLERICKNVYYAQRLGMIRSAFNDMLKFLPLQVKSRSRLREIKLNKKYDYVLCESEYVYSILKNSTLDAKNKLLRVHNDEVVYYKALFNDENSIFKKIYYFYEMLAFKYNKKDINSSFDKLLFISKDECDKESKGIWLPSHIPVMHPFKYDKFDLHNCNVLFVGNLFMPNNLQGLIWYLNKVHPMVIKENPDIKLTIAGNAKNGISEELKKAISIYDGNAINLITSPSDEELQAIYDGNCIFINPMLNGAGVKLKNLDAMRNTMFVVSTSIGSEGTGTNHGEQLVIANDEVLFAKHIINYSKNISGMKEIAFNAFSFIQENYDSKKVFSSIFKEN</sequence>
<organism>
    <name type="scientific">Klebsiella pneumoniae</name>
    <dbReference type="NCBI Taxonomy" id="573"/>
    <lineage>
        <taxon>Bacteria</taxon>
        <taxon>Pseudomonadati</taxon>
        <taxon>Pseudomonadota</taxon>
        <taxon>Gammaproteobacteria</taxon>
        <taxon>Enterobacterales</taxon>
        <taxon>Enterobacteriaceae</taxon>
        <taxon>Klebsiella/Raoultella group</taxon>
        <taxon>Klebsiella</taxon>
        <taxon>Klebsiella pneumoniae complex</taxon>
    </lineage>
</organism>
<dbReference type="EMBL" id="D21242">
    <property type="protein sequence ID" value="BAA04780.1"/>
    <property type="molecule type" value="Genomic_DNA"/>
</dbReference>
<dbReference type="RefSeq" id="WP_023302670.1">
    <property type="nucleotide sequence ID" value="NZ_WTEH01000017.1"/>
</dbReference>
<dbReference type="Gene3D" id="3.40.50.2000">
    <property type="entry name" value="Glycogen Phosphorylase B"/>
    <property type="match status" value="2"/>
</dbReference>
<dbReference type="Pfam" id="PF13692">
    <property type="entry name" value="Glyco_trans_1_4"/>
    <property type="match status" value="1"/>
</dbReference>
<dbReference type="SUPFAM" id="SSF53756">
    <property type="entry name" value="UDP-Glycosyltransferase/glycogen phosphorylase"/>
    <property type="match status" value="1"/>
</dbReference>
<protein>
    <recommendedName>
        <fullName>Uncharacterized 44.6 kDa protein in cps region</fullName>
    </recommendedName>
    <alternativeName>
        <fullName>ORF9</fullName>
    </alternativeName>
</protein>
<proteinExistence type="predicted"/>